<dbReference type="EMBL" id="BC118219">
    <property type="protein sequence ID" value="AAI18220.1"/>
    <property type="molecule type" value="mRNA"/>
</dbReference>
<dbReference type="RefSeq" id="NP_001069600.1">
    <property type="nucleotide sequence ID" value="NM_001076132.1"/>
</dbReference>
<dbReference type="SMR" id="Q17QR6"/>
<dbReference type="FunCoup" id="Q17QR6">
    <property type="interactions" value="268"/>
</dbReference>
<dbReference type="STRING" id="9913.ENSBTAP00000027786"/>
<dbReference type="PaxDb" id="9913-ENSBTAP00000027786"/>
<dbReference type="GeneID" id="538855"/>
<dbReference type="KEGG" id="bta:538855"/>
<dbReference type="CTD" id="201232"/>
<dbReference type="VEuPathDB" id="HostDB:ENSBTAG00000020853"/>
<dbReference type="eggNOG" id="KOG2504">
    <property type="taxonomic scope" value="Eukaryota"/>
</dbReference>
<dbReference type="HOGENOM" id="CLU_001265_59_1_1"/>
<dbReference type="InParanoid" id="Q17QR6"/>
<dbReference type="OMA" id="DLVWQIS"/>
<dbReference type="OrthoDB" id="2213137at2759"/>
<dbReference type="TreeFam" id="TF313792"/>
<dbReference type="Proteomes" id="UP000009136">
    <property type="component" value="Chromosome 19"/>
</dbReference>
<dbReference type="Bgee" id="ENSBTAG00000020853">
    <property type="expression patterns" value="Expressed in liver and 101 other cell types or tissues"/>
</dbReference>
<dbReference type="GO" id="GO:0005794">
    <property type="term" value="C:Golgi apparatus"/>
    <property type="evidence" value="ECO:0000250"/>
    <property type="project" value="UniProtKB"/>
</dbReference>
<dbReference type="GO" id="GO:0000139">
    <property type="term" value="C:Golgi membrane"/>
    <property type="evidence" value="ECO:0007669"/>
    <property type="project" value="UniProtKB-SubCell"/>
</dbReference>
<dbReference type="GO" id="GO:0005886">
    <property type="term" value="C:plasma membrane"/>
    <property type="evidence" value="ECO:0000318"/>
    <property type="project" value="GO_Central"/>
</dbReference>
<dbReference type="GO" id="GO:0008028">
    <property type="term" value="F:monocarboxylic acid transmembrane transporter activity"/>
    <property type="evidence" value="ECO:0000318"/>
    <property type="project" value="GO_Central"/>
</dbReference>
<dbReference type="GO" id="GO:0015293">
    <property type="term" value="F:symporter activity"/>
    <property type="evidence" value="ECO:0007669"/>
    <property type="project" value="UniProtKB-KW"/>
</dbReference>
<dbReference type="CDD" id="cd17423">
    <property type="entry name" value="MFS_MCT11_13"/>
    <property type="match status" value="1"/>
</dbReference>
<dbReference type="FunFam" id="1.20.1250.20:FF:000163">
    <property type="entry name" value="Putative monocarboxylate transporter 13"/>
    <property type="match status" value="1"/>
</dbReference>
<dbReference type="Gene3D" id="1.20.1250.20">
    <property type="entry name" value="MFS general substrate transporter like domains"/>
    <property type="match status" value="1"/>
</dbReference>
<dbReference type="InterPro" id="IPR011701">
    <property type="entry name" value="MFS"/>
</dbReference>
<dbReference type="InterPro" id="IPR020846">
    <property type="entry name" value="MFS_dom"/>
</dbReference>
<dbReference type="InterPro" id="IPR048233">
    <property type="entry name" value="MFS_MCT_13"/>
</dbReference>
<dbReference type="InterPro" id="IPR036259">
    <property type="entry name" value="MFS_trans_sf"/>
</dbReference>
<dbReference type="InterPro" id="IPR050327">
    <property type="entry name" value="Proton-linked_MCT"/>
</dbReference>
<dbReference type="PANTHER" id="PTHR11360">
    <property type="entry name" value="MONOCARBOXYLATE TRANSPORTER"/>
    <property type="match status" value="1"/>
</dbReference>
<dbReference type="PANTHER" id="PTHR11360:SF19">
    <property type="entry name" value="MONOCARBOXYLATE TRANSPORTER 13"/>
    <property type="match status" value="1"/>
</dbReference>
<dbReference type="Pfam" id="PF07690">
    <property type="entry name" value="MFS_1"/>
    <property type="match status" value="1"/>
</dbReference>
<dbReference type="SUPFAM" id="SSF103473">
    <property type="entry name" value="MFS general substrate transporter"/>
    <property type="match status" value="1"/>
</dbReference>
<dbReference type="PROSITE" id="PS50850">
    <property type="entry name" value="MFS"/>
    <property type="match status" value="1"/>
</dbReference>
<comment type="function">
    <text evidence="1">Proton-linked monocarboxylate transporter. May catalyze the transport of monocarboxylates across the plasma membrane.</text>
</comment>
<comment type="subcellular location">
    <subcellularLocation>
        <location evidence="1">Golgi apparatus membrane</location>
        <topology evidence="1">Multi-pass membrane protein</topology>
    </subcellularLocation>
    <subcellularLocation>
        <location evidence="2">Cell membrane</location>
        <topology evidence="2">Multi-pass membrane protein</topology>
    </subcellularLocation>
</comment>
<comment type="similarity">
    <text evidence="3">Belongs to the major facilitator superfamily. Monocarboxylate porter (TC 2.A.1.13) family.</text>
</comment>
<sequence>MAYRAEPPDGGWGWMVVLSAFFQSALVFGVLRSFGVFFVEFVAAFEEPAARVSWIASIGIAVQQFGSPVGSALSTKFGPRPAVMTGGILTALGMLLASFATSLTHLYLSIGLLSGSGWALTFTPTLACLSRYFSRRRSLAMGLALTGVGLSSFAFAPLFQWLLNHYAWRGALLLVSALSLHLVACGALLRPLSLAEDPVVGGPGAQITSLLRHGPFLRYTVALTLINTGYFIPYVHLVAHLRDLGWDPLPAAFLLSVAAISDLVGRVASGWLGDAVPGPVARLLMLWTTLTGVILALYPVAEAPTGLVALTMAYGFTSGALTPVAFSVLPELVGTGKIYCGLGLVQMVESIGGLLGAPLSGYLRDVTGNYTASFVVAGAFLLAGSGVLITLPHFFCFSAPTSKPQDLVTEALDTKVPLPEEGLGED</sequence>
<proteinExistence type="evidence at transcript level"/>
<evidence type="ECO:0000250" key="1">
    <source>
        <dbReference type="UniProtKB" id="Q7RTY0"/>
    </source>
</evidence>
<evidence type="ECO:0000255" key="2"/>
<evidence type="ECO:0000305" key="3"/>
<feature type="chain" id="PRO_0000287186" description="Monocarboxylate transporter 13">
    <location>
        <begin position="1"/>
        <end position="426"/>
    </location>
</feature>
<feature type="topological domain" description="Cytoplasmic" evidence="2">
    <location>
        <begin position="1"/>
        <end position="10"/>
    </location>
</feature>
<feature type="transmembrane region" description="Helical" evidence="2">
    <location>
        <begin position="11"/>
        <end position="31"/>
    </location>
</feature>
<feature type="transmembrane region" description="Helical" evidence="2">
    <location>
        <begin position="52"/>
        <end position="72"/>
    </location>
</feature>
<feature type="transmembrane region" description="Helical" evidence="2">
    <location>
        <begin position="83"/>
        <end position="103"/>
    </location>
</feature>
<feature type="transmembrane region" description="Helical" evidence="2">
    <location>
        <begin position="106"/>
        <end position="126"/>
    </location>
</feature>
<feature type="transmembrane region" description="Helical" evidence="2">
    <location>
        <begin position="139"/>
        <end position="159"/>
    </location>
</feature>
<feature type="transmembrane region" description="Helical" evidence="2">
    <location>
        <begin position="172"/>
        <end position="192"/>
    </location>
</feature>
<feature type="transmembrane region" description="Helical" evidence="2">
    <location>
        <begin position="221"/>
        <end position="241"/>
    </location>
</feature>
<feature type="transmembrane region" description="Helical" evidence="2">
    <location>
        <begin position="244"/>
        <end position="264"/>
    </location>
</feature>
<feature type="transmembrane region" description="Helical" evidence="2">
    <location>
        <begin position="283"/>
        <end position="303"/>
    </location>
</feature>
<feature type="transmembrane region" description="Helical" evidence="2">
    <location>
        <begin position="306"/>
        <end position="326"/>
    </location>
</feature>
<feature type="transmembrane region" description="Helical" evidence="2">
    <location>
        <begin position="338"/>
        <end position="358"/>
    </location>
</feature>
<feature type="transmembrane region" description="Helical" evidence="2">
    <location>
        <begin position="374"/>
        <end position="394"/>
    </location>
</feature>
<feature type="topological domain" description="Cytoplasmic" evidence="2">
    <location>
        <begin position="395"/>
        <end position="426"/>
    </location>
</feature>
<gene>
    <name type="primary">SLC16A13</name>
    <name type="synonym">MCT13</name>
</gene>
<name>MOT13_BOVIN</name>
<protein>
    <recommendedName>
        <fullName>Monocarboxylate transporter 13</fullName>
        <shortName>MCT 13</shortName>
    </recommendedName>
    <alternativeName>
        <fullName>Solute carrier family 16 member 13</fullName>
    </alternativeName>
</protein>
<accession>Q17QR6</accession>
<keyword id="KW-1003">Cell membrane</keyword>
<keyword id="KW-0333">Golgi apparatus</keyword>
<keyword id="KW-0472">Membrane</keyword>
<keyword id="KW-1185">Reference proteome</keyword>
<keyword id="KW-0769">Symport</keyword>
<keyword id="KW-0812">Transmembrane</keyword>
<keyword id="KW-1133">Transmembrane helix</keyword>
<keyword id="KW-0813">Transport</keyword>
<organism>
    <name type="scientific">Bos taurus</name>
    <name type="common">Bovine</name>
    <dbReference type="NCBI Taxonomy" id="9913"/>
    <lineage>
        <taxon>Eukaryota</taxon>
        <taxon>Metazoa</taxon>
        <taxon>Chordata</taxon>
        <taxon>Craniata</taxon>
        <taxon>Vertebrata</taxon>
        <taxon>Euteleostomi</taxon>
        <taxon>Mammalia</taxon>
        <taxon>Eutheria</taxon>
        <taxon>Laurasiatheria</taxon>
        <taxon>Artiodactyla</taxon>
        <taxon>Ruminantia</taxon>
        <taxon>Pecora</taxon>
        <taxon>Bovidae</taxon>
        <taxon>Bovinae</taxon>
        <taxon>Bos</taxon>
    </lineage>
</organism>
<reference key="1">
    <citation type="submission" date="2006-06" db="EMBL/GenBank/DDBJ databases">
        <authorList>
            <consortium name="NIH - Mammalian Gene Collection (MGC) project"/>
        </authorList>
    </citation>
    <scope>NUCLEOTIDE SEQUENCE [LARGE SCALE MRNA]</scope>
    <source>
        <strain>Hereford</strain>
        <tissue>Thalamus</tissue>
    </source>
</reference>